<protein>
    <recommendedName>
        <fullName>Reticulon-3</fullName>
    </recommendedName>
</protein>
<organism>
    <name type="scientific">Xenopus tropicalis</name>
    <name type="common">Western clawed frog</name>
    <name type="synonym">Silurana tropicalis</name>
    <dbReference type="NCBI Taxonomy" id="8364"/>
    <lineage>
        <taxon>Eukaryota</taxon>
        <taxon>Metazoa</taxon>
        <taxon>Chordata</taxon>
        <taxon>Craniata</taxon>
        <taxon>Vertebrata</taxon>
        <taxon>Euteleostomi</taxon>
        <taxon>Amphibia</taxon>
        <taxon>Batrachia</taxon>
        <taxon>Anura</taxon>
        <taxon>Pipoidea</taxon>
        <taxon>Pipidae</taxon>
        <taxon>Xenopodinae</taxon>
        <taxon>Xenopus</taxon>
        <taxon>Silurana</taxon>
    </lineage>
</organism>
<dbReference type="EMBL" id="CR855761">
    <property type="protein sequence ID" value="CAJ81633.1"/>
    <property type="molecule type" value="mRNA"/>
</dbReference>
<dbReference type="EMBL" id="CF242019">
    <property type="status" value="NOT_ANNOTATED_CDS"/>
    <property type="molecule type" value="mRNA"/>
</dbReference>
<dbReference type="EMBL" id="BK004013">
    <property type="protein sequence ID" value="DAA02075.1"/>
    <property type="status" value="ALT_INIT"/>
    <property type="molecule type" value="mRNA"/>
</dbReference>
<dbReference type="RefSeq" id="NP_001016762.1">
    <property type="nucleotide sequence ID" value="NM_001016762.3"/>
</dbReference>
<dbReference type="SMR" id="Q28D16"/>
<dbReference type="STRING" id="8364.ENSXETP00000034363"/>
<dbReference type="PaxDb" id="8364-ENSXETP00000005799"/>
<dbReference type="GeneID" id="549516"/>
<dbReference type="KEGG" id="xtr:549516"/>
<dbReference type="AGR" id="Xenbase:XB-GENE-975126"/>
<dbReference type="CTD" id="10313"/>
<dbReference type="Xenbase" id="XB-GENE-975126">
    <property type="gene designation" value="rtn3"/>
</dbReference>
<dbReference type="eggNOG" id="KOG1792">
    <property type="taxonomic scope" value="Eukaryota"/>
</dbReference>
<dbReference type="InParanoid" id="Q28D16"/>
<dbReference type="OrthoDB" id="567788at2759"/>
<dbReference type="Proteomes" id="UP000008143">
    <property type="component" value="Chromosome 4"/>
</dbReference>
<dbReference type="GO" id="GO:0005783">
    <property type="term" value="C:endoplasmic reticulum"/>
    <property type="evidence" value="ECO:0000250"/>
    <property type="project" value="UniProtKB"/>
</dbReference>
<dbReference type="GO" id="GO:0005789">
    <property type="term" value="C:endoplasmic reticulum membrane"/>
    <property type="evidence" value="ECO:0007669"/>
    <property type="project" value="UniProtKB-SubCell"/>
</dbReference>
<dbReference type="GO" id="GO:0005794">
    <property type="term" value="C:Golgi apparatus"/>
    <property type="evidence" value="ECO:0000250"/>
    <property type="project" value="UniProtKB"/>
</dbReference>
<dbReference type="GO" id="GO:0000139">
    <property type="term" value="C:Golgi membrane"/>
    <property type="evidence" value="ECO:0007669"/>
    <property type="project" value="UniProtKB-SubCell"/>
</dbReference>
<dbReference type="GO" id="GO:1902430">
    <property type="term" value="P:negative regulation of amyloid-beta formation"/>
    <property type="evidence" value="ECO:0000250"/>
    <property type="project" value="UniProtKB"/>
</dbReference>
<dbReference type="GO" id="GO:0016192">
    <property type="term" value="P:vesicle-mediated transport"/>
    <property type="evidence" value="ECO:0007669"/>
    <property type="project" value="UniProtKB-KW"/>
</dbReference>
<dbReference type="Gene3D" id="1.20.5.2480">
    <property type="match status" value="1"/>
</dbReference>
<dbReference type="InterPro" id="IPR003388">
    <property type="entry name" value="Reticulon"/>
</dbReference>
<dbReference type="InterPro" id="IPR046964">
    <property type="entry name" value="RTN1-4"/>
</dbReference>
<dbReference type="PANTHER" id="PTHR45799:SF4">
    <property type="entry name" value="RETICULON-3"/>
    <property type="match status" value="1"/>
</dbReference>
<dbReference type="PANTHER" id="PTHR45799">
    <property type="entry name" value="RETICULON-LIKE PROTEIN"/>
    <property type="match status" value="1"/>
</dbReference>
<dbReference type="Pfam" id="PF02453">
    <property type="entry name" value="Reticulon"/>
    <property type="match status" value="1"/>
</dbReference>
<dbReference type="PROSITE" id="PS50845">
    <property type="entry name" value="RETICULON"/>
    <property type="match status" value="1"/>
</dbReference>
<name>RTN3_XENTR</name>
<evidence type="ECO:0000250" key="1">
    <source>
        <dbReference type="UniProtKB" id="O95197"/>
    </source>
</evidence>
<evidence type="ECO:0000250" key="2">
    <source>
        <dbReference type="UniProtKB" id="Q5J6M8"/>
    </source>
</evidence>
<evidence type="ECO:0000255" key="3"/>
<evidence type="ECO:0000255" key="4">
    <source>
        <dbReference type="PROSITE-ProRule" id="PRU00170"/>
    </source>
</evidence>
<evidence type="ECO:0000256" key="5">
    <source>
        <dbReference type="SAM" id="MobiDB-lite"/>
    </source>
</evidence>
<evidence type="ECO:0000305" key="6"/>
<feature type="chain" id="PRO_0000280544" description="Reticulon-3">
    <location>
        <begin position="1"/>
        <end position="213"/>
    </location>
</feature>
<feature type="transmembrane region" description="Helical" evidence="3">
    <location>
        <begin position="45"/>
        <end position="65"/>
    </location>
</feature>
<feature type="transmembrane region" description="Helical" evidence="3">
    <location>
        <begin position="154"/>
        <end position="174"/>
    </location>
</feature>
<feature type="domain" description="Reticulon" evidence="4">
    <location>
        <begin position="25"/>
        <end position="213"/>
    </location>
</feature>
<feature type="region of interest" description="Disordered" evidence="5">
    <location>
        <begin position="1"/>
        <end position="20"/>
    </location>
</feature>
<feature type="compositionally biased region" description="Polar residues" evidence="5">
    <location>
        <begin position="1"/>
        <end position="16"/>
    </location>
</feature>
<sequence length="213" mass="23284">MADTSGPQSSHISSSAGEKGSGCAVQDLLYWRDVKQSGMVFGGTMVLLLSLAAFSIISVISYLVLSLLAVTISYRVYKSVLQAVQKTDEGHPFKPLLEKDIALSSDAFQKALSTSLAHVNHALKYIVRLFLVEDLVDSLKLALLMWLMTYVGAVFNGITLLILGVLLAFTAPIVYEKYKVQIDHYVSLVHSHVKSITEKIQAKLPGALKKKSE</sequence>
<accession>Q28D16</accession>
<accession>Q6IFY2</accession>
<gene>
    <name type="primary">rtn3</name>
    <name type="ORF">TGas074p07.1</name>
</gene>
<keyword id="KW-0256">Endoplasmic reticulum</keyword>
<keyword id="KW-0931">ER-Golgi transport</keyword>
<keyword id="KW-0333">Golgi apparatus</keyword>
<keyword id="KW-0472">Membrane</keyword>
<keyword id="KW-1185">Reference proteome</keyword>
<keyword id="KW-0812">Transmembrane</keyword>
<keyword id="KW-1133">Transmembrane helix</keyword>
<keyword id="KW-0813">Transport</keyword>
<proteinExistence type="evidence at transcript level"/>
<reference key="1">
    <citation type="submission" date="2006-10" db="EMBL/GenBank/DDBJ databases">
        <authorList>
            <consortium name="Sanger Xenopus tropicalis EST/cDNA project"/>
        </authorList>
    </citation>
    <scope>NUCLEOTIDE SEQUENCE [LARGE SCALE MRNA]</scope>
    <source>
        <tissue>Gastrula</tissue>
    </source>
</reference>
<reference key="2">
    <citation type="submission" date="2003-08" db="EMBL/GenBank/DDBJ databases">
        <authorList>
            <consortium name="NIH - Xenopus Gene Collection (XGC) project"/>
        </authorList>
    </citation>
    <scope>NUCLEOTIDE SEQUENCE [LARGE SCALE MRNA]</scope>
    <source>
        <tissue>Neurula</tissue>
    </source>
</reference>
<reference key="3">
    <citation type="journal article" date="2003" name="FASEB J.">
        <title>A reticular rhapsody: phylogenic evolution and nomenclature of the RTN/Nogo gene family.</title>
        <authorList>
            <person name="Oertle T."/>
            <person name="Klinger M."/>
            <person name="Stuermer C.A.O."/>
            <person name="Schwab M.E."/>
        </authorList>
    </citation>
    <scope>IDENTIFICATION</scope>
</reference>
<comment type="function">
    <text evidence="1">May be involved in membrane trafficking in the early secretory pathway.</text>
</comment>
<comment type="subunit">
    <text evidence="1">Homodimer.</text>
</comment>
<comment type="subcellular location">
    <subcellularLocation>
        <location evidence="2">Endoplasmic reticulum membrane</location>
        <topology evidence="3">Multi-pass membrane protein</topology>
    </subcellularLocation>
    <subcellularLocation>
        <location evidence="1">Golgi apparatus membrane</location>
        <topology evidence="3">Multi-pass membrane protein</topology>
    </subcellularLocation>
</comment>
<comment type="sequence caution" evidence="6">
    <conflict type="erroneous initiation">
        <sequence resource="EMBL-CDS" id="DAA02075"/>
    </conflict>
</comment>